<evidence type="ECO:0000250" key="1"/>
<evidence type="ECO:0000250" key="2">
    <source>
        <dbReference type="UniProtKB" id="P15024"/>
    </source>
</evidence>
<evidence type="ECO:0000250" key="3">
    <source>
        <dbReference type="UniProtKB" id="Q9WAB2"/>
    </source>
</evidence>
<evidence type="ECO:0000256" key="4">
    <source>
        <dbReference type="SAM" id="MobiDB-lite"/>
    </source>
</evidence>
<evidence type="ECO:0000305" key="5"/>
<protein>
    <recommendedName>
        <fullName>Inner capsid protein lambda-1</fullName>
        <shortName>Lambda1</shortName>
        <ecNumber>3.6.4.13</ecNumber>
    </recommendedName>
    <alternativeName>
        <fullName>ATP-dependent DNA helicase lambda-1</fullName>
    </alternativeName>
    <alternativeName>
        <fullName>Lambda1(Hel)</fullName>
    </alternativeName>
</protein>
<sequence length="1275" mass="142031">MKRIPRKTRGKSSGKGNDSTERADDGSAQLRDKQSSKVTQNVKEPGTTLKEQYKTRPSLQTVQKATENAELPMQTNDEGAVDKKGNTKGDKTNEHVEAEVNAADATKRQAKDTDKQKAQVTYNDTGINNANELSRSGNVDNEGGDNQKPMTTRIAEATSAIISKHPARVGLPPTASSGHGYQCHVCSAVLFSPLDLDAHVASHGLHGNMTLTSSEIQRHITEFISSWQNHPIVQVSADVENKKTAQLLHADTPRLVTWDAGLCTSFKIVPIVPAQVPQDVLAYTFFTSSYAIQSPFPEAAVSRIVVHTRWASNVDFDRDSSVIMAPPTENNIHLFKQLLNNETLSVRGANPLMFRANVLHMLLEFVLDNLYINKHTGFSQDHTPFTEGANLRSLPGPDAEKWYAIMYPTRMGTPNVSKICNFVASCVRNRVGRFDRAQMMNGAMSEWVDVFETSDALTVSIRGRWMARLARMNINPTEIEWALTECAHGYVTVTSPYAPSVNRLMPYRVSNAERQISQIIRIMNIGNNATVIQPVLQDISVLLQRISPLQIDPTIISNTMSTVSESTTQTLSPASSILGKLRPSNSDFSSFRVALAGWLYNGVVTTVIDDSSYPKDGGSVTSLENLWDFFILALALPLTTDPCAPVKAFMTLANMMVGFETIPMDNQIYTQSRRASAFSTPHTWPRCFMNIQLISPIDAPILRQWAEIIHRYWPNPSQIRFGAPNVFGSANLFTPPEVLLLPIDHQPANVTTPTLDFTNELTNWRARVCELMKNLVDNQRYQPGWTQSLVSSMRGTLDKLKLIKSMTPMYLQQLAPVELAVIAPMLPFPPFQVPYVRLDRDRVPTMVGVTRQSRDTITQPALSLSTTNTTVGVPLALDARAITVALLSGKYPSDLVTNVWYADAIYPMYADTEVFSNLQRDMITCEAVQTLITLVAQISETQYPVDRYLDWIPSLRASAATAATFAEWVNTSMKTAFDLSDMLLEPLLSGDPRMSQLAIQYQQYNGRTFNVIPEMPGSVVTDCVQLTAEVFNHEYNLFGIARGDIIIGRVQSTHLWSPLAPPPDLVFDRDTPGVHVFGRDCRISFGMNGAAPMIRDETGMMVPFEGNWIFPLALWQMNTRYFNQQFDAWIKTGELRIRIEMGAYPYMLHYYDPRQYANAWNLTSAWLEEISPTSIPSVPFMVPISSDHDISSAPAVQYIISTEYNDRSLFCTNSSSPQTIAGPDKHIPVERYNILTNPDAPPTQIQLPEVVDLYNVVTRYAYETPPITAVVMGVP</sequence>
<comment type="function">
    <text evidence="2">Inner capsid protein that self-assembles to form an icosahedral capsid with a T=2 symmetry, which consists of 120 copies of VP2, with channels at each of its five-fold vertices. This capsid constitutes the innermost concentric layer of the viral mature particle.</text>
</comment>
<comment type="function">
    <text evidence="2">Displays NTPase, RNA 5'-triphosphatase (RTPase) and RNA helicase activities and probably participates in transcription of the viral genome. Helicase activity might be involved in unwinding or reannealing dsRNA during RNA synthesis. RTPase enzymatic activity represents the first step in RNA capping, which yields a 5'-diphosphorylated plus-strand RNA.</text>
</comment>
<comment type="catalytic activity">
    <reaction>
        <text>ATP + H2O = ADP + phosphate + H(+)</text>
        <dbReference type="Rhea" id="RHEA:13065"/>
        <dbReference type="ChEBI" id="CHEBI:15377"/>
        <dbReference type="ChEBI" id="CHEBI:15378"/>
        <dbReference type="ChEBI" id="CHEBI:30616"/>
        <dbReference type="ChEBI" id="CHEBI:43474"/>
        <dbReference type="ChEBI" id="CHEBI:456216"/>
        <dbReference type="EC" id="3.6.4.13"/>
    </reaction>
</comment>
<comment type="cofactor">
    <cofactor evidence="1">
        <name>Mg(2+)</name>
        <dbReference type="ChEBI" id="CHEBI:18420"/>
    </cofactor>
    <cofactor evidence="1">
        <name>Mn(2+)</name>
        <dbReference type="ChEBI" id="CHEBI:29035"/>
    </cofactor>
</comment>
<comment type="subunit">
    <text evidence="2 3">Homodecamer; each decamer is made up of two conformers of VP2, called VP2A and VP2B. 12 homodecamers assemble to form an icosahedral capsid. Interacts with protein mu-NS; in viral inclusions.</text>
</comment>
<comment type="subcellular location">
    <subcellularLocation>
        <location evidence="2">Virion</location>
    </subcellularLocation>
    <text evidence="2">Found in the inner capsid (120 copies).</text>
</comment>
<comment type="similarity">
    <text evidence="5">Belongs to the turreted BTV-fold inner capsid family.</text>
</comment>
<organism>
    <name type="scientific">Reovirus type 2 (strain D5/Jones)</name>
    <name type="common">T2J</name>
    <name type="synonym">Mammalian orthoreovirus 2</name>
    <dbReference type="NCBI Taxonomy" id="10885"/>
    <lineage>
        <taxon>Viruses</taxon>
        <taxon>Riboviria</taxon>
        <taxon>Orthornavirae</taxon>
        <taxon>Duplornaviricota</taxon>
        <taxon>Resentoviricetes</taxon>
        <taxon>Reovirales</taxon>
        <taxon>Spinareoviridae</taxon>
        <taxon>Orthoreovirus</taxon>
        <taxon>Mammalian orthoreovirus</taxon>
    </lineage>
</organism>
<keyword id="KW-0067">ATP-binding</keyword>
<keyword id="KW-0167">Capsid protein</keyword>
<keyword id="KW-0347">Helicase</keyword>
<keyword id="KW-0378">Hydrolase</keyword>
<keyword id="KW-1153">Inner capsid protein</keyword>
<keyword id="KW-0479">Metal-binding</keyword>
<keyword id="KW-0506">mRNA capping</keyword>
<keyword id="KW-0507">mRNA processing</keyword>
<keyword id="KW-0547">Nucleotide-binding</keyword>
<keyword id="KW-1141">T=2 icosahedral capsid protein</keyword>
<keyword id="KW-0946">Virion</keyword>
<keyword id="KW-0862">Zinc</keyword>
<keyword id="KW-0863">Zinc-finger</keyword>
<dbReference type="EC" id="3.6.4.13"/>
<dbReference type="EMBL" id="AF129821">
    <property type="protein sequence ID" value="AAD42305.1"/>
    <property type="molecule type" value="mRNA"/>
</dbReference>
<dbReference type="SMR" id="Q9WAB1"/>
<dbReference type="Proteomes" id="UP000006370">
    <property type="component" value="Genome"/>
</dbReference>
<dbReference type="GO" id="GO:0039625">
    <property type="term" value="C:viral inner capsid"/>
    <property type="evidence" value="ECO:0007669"/>
    <property type="project" value="UniProtKB-KW"/>
</dbReference>
<dbReference type="GO" id="GO:0005524">
    <property type="term" value="F:ATP binding"/>
    <property type="evidence" value="ECO:0007669"/>
    <property type="project" value="UniProtKB-KW"/>
</dbReference>
<dbReference type="GO" id="GO:0016887">
    <property type="term" value="F:ATP hydrolysis activity"/>
    <property type="evidence" value="ECO:0007669"/>
    <property type="project" value="RHEA"/>
</dbReference>
<dbReference type="GO" id="GO:0003724">
    <property type="term" value="F:RNA helicase activity"/>
    <property type="evidence" value="ECO:0007669"/>
    <property type="project" value="UniProtKB-EC"/>
</dbReference>
<dbReference type="GO" id="GO:0008270">
    <property type="term" value="F:zinc ion binding"/>
    <property type="evidence" value="ECO:0007669"/>
    <property type="project" value="UniProtKB-KW"/>
</dbReference>
<dbReference type="GO" id="GO:0006370">
    <property type="term" value="P:7-methylguanosine mRNA capping"/>
    <property type="evidence" value="ECO:0007669"/>
    <property type="project" value="UniProtKB-KW"/>
</dbReference>
<dbReference type="Gene3D" id="3.90.1830.10">
    <property type="entry name" value="Inner capsid protein lambda-1"/>
    <property type="match status" value="1"/>
</dbReference>
<dbReference type="InterPro" id="IPR054176">
    <property type="entry name" value="Lamba1_VP3"/>
</dbReference>
<dbReference type="InterPro" id="IPR044949">
    <property type="entry name" value="Lambda-1/VP3_sf"/>
</dbReference>
<dbReference type="InterPro" id="IPR013087">
    <property type="entry name" value="Znf_C2H2_type"/>
</dbReference>
<dbReference type="Pfam" id="PF22033">
    <property type="entry name" value="Lamba1_VP3"/>
    <property type="match status" value="1"/>
</dbReference>
<dbReference type="PROSITE" id="PS00028">
    <property type="entry name" value="ZINC_FINGER_C2H2_1"/>
    <property type="match status" value="1"/>
</dbReference>
<accession>Q9WAB1</accession>
<proteinExistence type="evidence at transcript level"/>
<reference key="1">
    <citation type="journal article" date="1999" name="Virology">
        <title>Mammalian reovirus L3 gene sequences and evidence for a distinct amino-terminal region of the lambda1 protein.</title>
        <authorList>
            <person name="Harrison S.J."/>
            <person name="Farsetta D.L."/>
            <person name="Kim J."/>
            <person name="Noble S."/>
            <person name="Broering T.J."/>
            <person name="Nibert M.L."/>
        </authorList>
    </citation>
    <scope>NUCLEOTIDE SEQUENCE [MRNA]</scope>
</reference>
<name>CAPSD_REOVJ</name>
<organismHost>
    <name type="scientific">Mammalia</name>
    <dbReference type="NCBI Taxonomy" id="40674"/>
</organismHost>
<feature type="chain" id="PRO_0000344997" description="Inner capsid protein lambda-1">
    <location>
        <begin position="1"/>
        <end position="1275"/>
    </location>
</feature>
<feature type="zinc finger region" description="C2H2-type">
    <location>
        <begin position="181"/>
        <end position="203"/>
    </location>
</feature>
<feature type="region of interest" description="Disordered" evidence="4">
    <location>
        <begin position="1"/>
        <end position="147"/>
    </location>
</feature>
<feature type="compositionally biased region" description="Basic residues" evidence="4">
    <location>
        <begin position="1"/>
        <end position="12"/>
    </location>
</feature>
<feature type="compositionally biased region" description="Basic and acidic residues" evidence="4">
    <location>
        <begin position="18"/>
        <end position="35"/>
    </location>
</feature>
<feature type="compositionally biased region" description="Polar residues" evidence="4">
    <location>
        <begin position="55"/>
        <end position="66"/>
    </location>
</feature>
<feature type="compositionally biased region" description="Basic and acidic residues" evidence="4">
    <location>
        <begin position="80"/>
        <end position="98"/>
    </location>
</feature>
<feature type="compositionally biased region" description="Basic and acidic residues" evidence="4">
    <location>
        <begin position="105"/>
        <end position="117"/>
    </location>
</feature>
<feature type="compositionally biased region" description="Polar residues" evidence="4">
    <location>
        <begin position="118"/>
        <end position="139"/>
    </location>
</feature>